<keyword id="KW-0963">Cytoplasm</keyword>
<keyword id="KW-0227">DNA damage</keyword>
<keyword id="KW-0233">DNA recombination</keyword>
<keyword id="KW-0234">DNA repair</keyword>
<keyword id="KW-0255">Endonuclease</keyword>
<keyword id="KW-0378">Hydrolase</keyword>
<keyword id="KW-0460">Magnesium</keyword>
<keyword id="KW-0479">Metal-binding</keyword>
<keyword id="KW-0540">Nuclease</keyword>
<keyword id="KW-1185">Reference proteome</keyword>
<accession>Q8Y611</accession>
<evidence type="ECO:0000250" key="1"/>
<evidence type="ECO:0000255" key="2">
    <source>
        <dbReference type="HAMAP-Rule" id="MF_00130"/>
    </source>
</evidence>
<evidence type="ECO:0000305" key="3"/>
<name>RECU_LISMO</name>
<protein>
    <recommendedName>
        <fullName>Holliday junction resolvase RecU</fullName>
        <ecNumber evidence="2">3.1.21.10</ecNumber>
    </recommendedName>
    <alternativeName>
        <fullName>Recombination protein U homolog</fullName>
    </alternativeName>
</protein>
<comment type="function">
    <text evidence="1">Endonuclease that resolves Holliday junction intermediates in genetic recombination. Cleaves mobile four-strand junctions by introducing symmetrical nicks in paired strands. Promotes annealing of linear ssDNA with homologous dsDNA. Required for DNA repair, homologous recombination and chromosome segregation (By similarity).</text>
</comment>
<comment type="catalytic activity">
    <reaction evidence="2">
        <text>Endonucleolytic cleavage at a junction such as a reciprocal single-stranded crossover between two homologous DNA duplexes (Holliday junction).</text>
        <dbReference type="EC" id="3.1.21.10"/>
    </reaction>
</comment>
<comment type="cofactor">
    <cofactor evidence="1">
        <name>Mg(2+)</name>
        <dbReference type="ChEBI" id="CHEBI:18420"/>
    </cofactor>
    <text evidence="1">Binds 1 Mg(2+) ion per subunit.</text>
</comment>
<comment type="subcellular location">
    <subcellularLocation>
        <location evidence="1">Cytoplasm</location>
    </subcellularLocation>
</comment>
<comment type="similarity">
    <text evidence="3">Belongs to the RecU family.</text>
</comment>
<sequence>MAIGYPNGKKYAASHEVLPQQKRKAPVTYGKRGMSLEDDLNDTIAYYLTHEIAVIHKKPTPVQIVSVDYPKRSSAKIKEAYFKTPSTTDYNGVYKGKYVDFEAKETQNTTSFPLSNFHDHQMTHMANVLKQDGIVFVIIAFQKLGETHFIPFEKFYPFWERMQSGGRKSVTIAEIQDVSDQIPYGLNPRLDFLQSIDKLYF</sequence>
<feature type="chain" id="PRO_0000212301" description="Holliday junction resolvase RecU">
    <location>
        <begin position="1"/>
        <end position="201"/>
    </location>
</feature>
<feature type="binding site" evidence="1">
    <location>
        <position position="87"/>
    </location>
    <ligand>
        <name>Mg(2+)</name>
        <dbReference type="ChEBI" id="CHEBI:18420"/>
    </ligand>
</feature>
<feature type="binding site" evidence="1">
    <location>
        <position position="89"/>
    </location>
    <ligand>
        <name>Mg(2+)</name>
        <dbReference type="ChEBI" id="CHEBI:18420"/>
    </ligand>
</feature>
<feature type="binding site" evidence="1">
    <location>
        <position position="102"/>
    </location>
    <ligand>
        <name>Mg(2+)</name>
        <dbReference type="ChEBI" id="CHEBI:18420"/>
    </ligand>
</feature>
<feature type="binding site" evidence="1">
    <location>
        <position position="121"/>
    </location>
    <ligand>
        <name>Mg(2+)</name>
        <dbReference type="ChEBI" id="CHEBI:18420"/>
    </ligand>
</feature>
<feature type="site" description="Transition state stabilizer" evidence="1">
    <location>
        <position position="104"/>
    </location>
</feature>
<gene>
    <name type="primary">recU</name>
    <name type="ordered locus">lmo1891</name>
</gene>
<organism>
    <name type="scientific">Listeria monocytogenes serovar 1/2a (strain ATCC BAA-679 / EGD-e)</name>
    <dbReference type="NCBI Taxonomy" id="169963"/>
    <lineage>
        <taxon>Bacteria</taxon>
        <taxon>Bacillati</taxon>
        <taxon>Bacillota</taxon>
        <taxon>Bacilli</taxon>
        <taxon>Bacillales</taxon>
        <taxon>Listeriaceae</taxon>
        <taxon>Listeria</taxon>
    </lineage>
</organism>
<proteinExistence type="inferred from homology"/>
<reference key="1">
    <citation type="journal article" date="2001" name="Science">
        <title>Comparative genomics of Listeria species.</title>
        <authorList>
            <person name="Glaser P."/>
            <person name="Frangeul L."/>
            <person name="Buchrieser C."/>
            <person name="Rusniok C."/>
            <person name="Amend A."/>
            <person name="Baquero F."/>
            <person name="Berche P."/>
            <person name="Bloecker H."/>
            <person name="Brandt P."/>
            <person name="Chakraborty T."/>
            <person name="Charbit A."/>
            <person name="Chetouani F."/>
            <person name="Couve E."/>
            <person name="de Daruvar A."/>
            <person name="Dehoux P."/>
            <person name="Domann E."/>
            <person name="Dominguez-Bernal G."/>
            <person name="Duchaud E."/>
            <person name="Durant L."/>
            <person name="Dussurget O."/>
            <person name="Entian K.-D."/>
            <person name="Fsihi H."/>
            <person name="Garcia-del Portillo F."/>
            <person name="Garrido P."/>
            <person name="Gautier L."/>
            <person name="Goebel W."/>
            <person name="Gomez-Lopez N."/>
            <person name="Hain T."/>
            <person name="Hauf J."/>
            <person name="Jackson D."/>
            <person name="Jones L.-M."/>
            <person name="Kaerst U."/>
            <person name="Kreft J."/>
            <person name="Kuhn M."/>
            <person name="Kunst F."/>
            <person name="Kurapkat G."/>
            <person name="Madueno E."/>
            <person name="Maitournam A."/>
            <person name="Mata Vicente J."/>
            <person name="Ng E."/>
            <person name="Nedjari H."/>
            <person name="Nordsiek G."/>
            <person name="Novella S."/>
            <person name="de Pablos B."/>
            <person name="Perez-Diaz J.-C."/>
            <person name="Purcell R."/>
            <person name="Remmel B."/>
            <person name="Rose M."/>
            <person name="Schlueter T."/>
            <person name="Simoes N."/>
            <person name="Tierrez A."/>
            <person name="Vazquez-Boland J.-A."/>
            <person name="Voss H."/>
            <person name="Wehland J."/>
            <person name="Cossart P."/>
        </authorList>
    </citation>
    <scope>NUCLEOTIDE SEQUENCE [LARGE SCALE GENOMIC DNA]</scope>
    <source>
        <strain>ATCC BAA-679 / EGD-e</strain>
    </source>
</reference>
<dbReference type="EC" id="3.1.21.10" evidence="2"/>
<dbReference type="EMBL" id="AL591981">
    <property type="protein sequence ID" value="CAC99969.1"/>
    <property type="molecule type" value="Genomic_DNA"/>
</dbReference>
<dbReference type="PIR" id="AC1311">
    <property type="entry name" value="AC1311"/>
</dbReference>
<dbReference type="RefSeq" id="NP_465415.1">
    <property type="nucleotide sequence ID" value="NC_003210.1"/>
</dbReference>
<dbReference type="RefSeq" id="WP_003723001.1">
    <property type="nucleotide sequence ID" value="NZ_CP149495.1"/>
</dbReference>
<dbReference type="SMR" id="Q8Y611"/>
<dbReference type="STRING" id="169963.gene:17594576"/>
<dbReference type="PaxDb" id="169963-lmo1891"/>
<dbReference type="EnsemblBacteria" id="CAC99969">
    <property type="protein sequence ID" value="CAC99969"/>
    <property type="gene ID" value="CAC99969"/>
</dbReference>
<dbReference type="GeneID" id="985797"/>
<dbReference type="KEGG" id="lmo:lmo1891"/>
<dbReference type="PATRIC" id="fig|169963.11.peg.1937"/>
<dbReference type="eggNOG" id="COG3331">
    <property type="taxonomic scope" value="Bacteria"/>
</dbReference>
<dbReference type="HOGENOM" id="CLU_096340_0_0_9"/>
<dbReference type="OrthoDB" id="9783592at2"/>
<dbReference type="PhylomeDB" id="Q8Y611"/>
<dbReference type="BioCyc" id="LMON169963:LMO1891-MONOMER"/>
<dbReference type="Proteomes" id="UP000000817">
    <property type="component" value="Chromosome"/>
</dbReference>
<dbReference type="GO" id="GO:0005737">
    <property type="term" value="C:cytoplasm"/>
    <property type="evidence" value="ECO:0007669"/>
    <property type="project" value="UniProtKB-SubCell"/>
</dbReference>
<dbReference type="GO" id="GO:0004519">
    <property type="term" value="F:endonuclease activity"/>
    <property type="evidence" value="ECO:0007669"/>
    <property type="project" value="UniProtKB-UniRule"/>
</dbReference>
<dbReference type="GO" id="GO:0000287">
    <property type="term" value="F:magnesium ion binding"/>
    <property type="evidence" value="ECO:0007669"/>
    <property type="project" value="UniProtKB-UniRule"/>
</dbReference>
<dbReference type="GO" id="GO:0003676">
    <property type="term" value="F:nucleic acid binding"/>
    <property type="evidence" value="ECO:0007669"/>
    <property type="project" value="InterPro"/>
</dbReference>
<dbReference type="GO" id="GO:0007059">
    <property type="term" value="P:chromosome segregation"/>
    <property type="evidence" value="ECO:0007669"/>
    <property type="project" value="UniProtKB-UniRule"/>
</dbReference>
<dbReference type="GO" id="GO:0006310">
    <property type="term" value="P:DNA recombination"/>
    <property type="evidence" value="ECO:0007669"/>
    <property type="project" value="UniProtKB-UniRule"/>
</dbReference>
<dbReference type="GO" id="GO:0006281">
    <property type="term" value="P:DNA repair"/>
    <property type="evidence" value="ECO:0007669"/>
    <property type="project" value="UniProtKB-UniRule"/>
</dbReference>
<dbReference type="CDD" id="cd22354">
    <property type="entry name" value="RecU-like"/>
    <property type="match status" value="1"/>
</dbReference>
<dbReference type="Gene3D" id="3.40.1350.10">
    <property type="match status" value="1"/>
</dbReference>
<dbReference type="HAMAP" id="MF_00130">
    <property type="entry name" value="RecU"/>
    <property type="match status" value="1"/>
</dbReference>
<dbReference type="InterPro" id="IPR004612">
    <property type="entry name" value="Resolv_RecU"/>
</dbReference>
<dbReference type="InterPro" id="IPR011335">
    <property type="entry name" value="Restrct_endonuc-II-like"/>
</dbReference>
<dbReference type="InterPro" id="IPR011856">
    <property type="entry name" value="tRNA_endonuc-like_dom_sf"/>
</dbReference>
<dbReference type="NCBIfam" id="NF002582">
    <property type="entry name" value="PRK02234.1-3"/>
    <property type="match status" value="1"/>
</dbReference>
<dbReference type="NCBIfam" id="NF002584">
    <property type="entry name" value="PRK02234.1-5"/>
    <property type="match status" value="1"/>
</dbReference>
<dbReference type="NCBIfam" id="TIGR00648">
    <property type="entry name" value="recU"/>
    <property type="match status" value="1"/>
</dbReference>
<dbReference type="Pfam" id="PF03838">
    <property type="entry name" value="RecU"/>
    <property type="match status" value="1"/>
</dbReference>
<dbReference type="PIRSF" id="PIRSF037785">
    <property type="entry name" value="RecU"/>
    <property type="match status" value="1"/>
</dbReference>
<dbReference type="SUPFAM" id="SSF52980">
    <property type="entry name" value="Restriction endonuclease-like"/>
    <property type="match status" value="1"/>
</dbReference>